<protein>
    <recommendedName>
        <fullName evidence="1">UDP-3-O-acyl-N-acetylglucosamine deacetylase</fullName>
        <shortName evidence="1">UDP-3-O-acyl-GlcNAc deacetylase</shortName>
        <ecNumber evidence="1">3.5.1.108</ecNumber>
    </recommendedName>
    <alternativeName>
        <fullName evidence="1">UDP-3-O-[R-3-hydroxymyristoyl]-N-acetylglucosamine deacetylase</fullName>
    </alternativeName>
</protein>
<gene>
    <name evidence="1" type="primary">lpxC</name>
    <name type="ordered locus">Pfl01_4667</name>
</gene>
<comment type="function">
    <text evidence="1">Catalyzes the hydrolysis of UDP-3-O-myristoyl-N-acetylglucosamine to form UDP-3-O-myristoylglucosamine and acetate, the committed step in lipid A biosynthesis.</text>
</comment>
<comment type="catalytic activity">
    <reaction evidence="1">
        <text>a UDP-3-O-[(3R)-3-hydroxyacyl]-N-acetyl-alpha-D-glucosamine + H2O = a UDP-3-O-[(3R)-3-hydroxyacyl]-alpha-D-glucosamine + acetate</text>
        <dbReference type="Rhea" id="RHEA:67816"/>
        <dbReference type="ChEBI" id="CHEBI:15377"/>
        <dbReference type="ChEBI" id="CHEBI:30089"/>
        <dbReference type="ChEBI" id="CHEBI:137740"/>
        <dbReference type="ChEBI" id="CHEBI:173225"/>
        <dbReference type="EC" id="3.5.1.108"/>
    </reaction>
</comment>
<comment type="cofactor">
    <cofactor evidence="1">
        <name>Zn(2+)</name>
        <dbReference type="ChEBI" id="CHEBI:29105"/>
    </cofactor>
</comment>
<comment type="pathway">
    <text evidence="1">Glycolipid biosynthesis; lipid IV(A) biosynthesis; lipid IV(A) from (3R)-3-hydroxytetradecanoyl-[acyl-carrier-protein] and UDP-N-acetyl-alpha-D-glucosamine: step 2/6.</text>
</comment>
<comment type="similarity">
    <text evidence="1">Belongs to the LpxC family.</text>
</comment>
<sequence>MIKQRTLKNIIRATGVGLHSGEKVYLTLKPAPVDTGIVFRRADLDPVVEIPARAANVGETTMSTTLVNGDVKVDTVEHLLSAMAGLGIDNAYVELSASEVPIMDGSAGPFVFLIQSAGLEEQDAAKKFIRILREVTVEDGDKRATFVPFEGFKVSFEIDFDHPVFRDRTQSASVDFSSTSFVKEVSRARTFGFMSDIEYLRKHNLALGGSVENAIVVDADGVLNEDGLRYEDEFVKHKILDAIGDLYLLGNSLIGEFKGFKSGHALNNQLLRKLIEQKDAWEVVTFEDASTAPISYMRPVAAV</sequence>
<dbReference type="EC" id="3.5.1.108" evidence="1"/>
<dbReference type="EMBL" id="CP000094">
    <property type="protein sequence ID" value="ABA76404.1"/>
    <property type="molecule type" value="Genomic_DNA"/>
</dbReference>
<dbReference type="RefSeq" id="WP_007956752.1">
    <property type="nucleotide sequence ID" value="NC_007492.2"/>
</dbReference>
<dbReference type="SMR" id="Q3K750"/>
<dbReference type="KEGG" id="pfo:Pfl01_4667"/>
<dbReference type="eggNOG" id="COG0774">
    <property type="taxonomic scope" value="Bacteria"/>
</dbReference>
<dbReference type="HOGENOM" id="CLU_046528_1_0_6"/>
<dbReference type="UniPathway" id="UPA00359">
    <property type="reaction ID" value="UER00478"/>
</dbReference>
<dbReference type="Proteomes" id="UP000002704">
    <property type="component" value="Chromosome"/>
</dbReference>
<dbReference type="GO" id="GO:0016020">
    <property type="term" value="C:membrane"/>
    <property type="evidence" value="ECO:0007669"/>
    <property type="project" value="GOC"/>
</dbReference>
<dbReference type="GO" id="GO:0046872">
    <property type="term" value="F:metal ion binding"/>
    <property type="evidence" value="ECO:0007669"/>
    <property type="project" value="UniProtKB-KW"/>
</dbReference>
<dbReference type="GO" id="GO:0103117">
    <property type="term" value="F:UDP-3-O-acyl-N-acetylglucosamine deacetylase activity"/>
    <property type="evidence" value="ECO:0007669"/>
    <property type="project" value="UniProtKB-UniRule"/>
</dbReference>
<dbReference type="GO" id="GO:0009245">
    <property type="term" value="P:lipid A biosynthetic process"/>
    <property type="evidence" value="ECO:0007669"/>
    <property type="project" value="UniProtKB-UniRule"/>
</dbReference>
<dbReference type="FunFam" id="3.30.230.20:FF:000001">
    <property type="entry name" value="UDP-3-O-acyl-N-acetylglucosamine deacetylase"/>
    <property type="match status" value="1"/>
</dbReference>
<dbReference type="Gene3D" id="3.30.230.20">
    <property type="entry name" value="lpxc deacetylase, domain 1"/>
    <property type="match status" value="1"/>
</dbReference>
<dbReference type="Gene3D" id="3.30.1700.10">
    <property type="entry name" value="lpxc deacetylase, domain 2"/>
    <property type="match status" value="1"/>
</dbReference>
<dbReference type="HAMAP" id="MF_00388">
    <property type="entry name" value="LpxC"/>
    <property type="match status" value="1"/>
</dbReference>
<dbReference type="InterPro" id="IPR020568">
    <property type="entry name" value="Ribosomal_Su5_D2-typ_SF"/>
</dbReference>
<dbReference type="InterPro" id="IPR004463">
    <property type="entry name" value="UDP-acyl_GlcNac_deAcase"/>
</dbReference>
<dbReference type="InterPro" id="IPR011334">
    <property type="entry name" value="UDP-acyl_GlcNac_deAcase_C"/>
</dbReference>
<dbReference type="InterPro" id="IPR015870">
    <property type="entry name" value="UDP-acyl_N-AcGlcN_deAcase_N"/>
</dbReference>
<dbReference type="NCBIfam" id="TIGR00325">
    <property type="entry name" value="lpxC"/>
    <property type="match status" value="1"/>
</dbReference>
<dbReference type="PANTHER" id="PTHR33694">
    <property type="entry name" value="UDP-3-O-ACYL-N-ACETYLGLUCOSAMINE DEACETYLASE 1, MITOCHONDRIAL-RELATED"/>
    <property type="match status" value="1"/>
</dbReference>
<dbReference type="PANTHER" id="PTHR33694:SF1">
    <property type="entry name" value="UDP-3-O-ACYL-N-ACETYLGLUCOSAMINE DEACETYLASE 1, MITOCHONDRIAL-RELATED"/>
    <property type="match status" value="1"/>
</dbReference>
<dbReference type="Pfam" id="PF03331">
    <property type="entry name" value="LpxC"/>
    <property type="match status" value="1"/>
</dbReference>
<dbReference type="SUPFAM" id="SSF54211">
    <property type="entry name" value="Ribosomal protein S5 domain 2-like"/>
    <property type="match status" value="2"/>
</dbReference>
<proteinExistence type="inferred from homology"/>
<accession>Q3K750</accession>
<name>LPXC_PSEPF</name>
<organism>
    <name type="scientific">Pseudomonas fluorescens (strain Pf0-1)</name>
    <dbReference type="NCBI Taxonomy" id="205922"/>
    <lineage>
        <taxon>Bacteria</taxon>
        <taxon>Pseudomonadati</taxon>
        <taxon>Pseudomonadota</taxon>
        <taxon>Gammaproteobacteria</taxon>
        <taxon>Pseudomonadales</taxon>
        <taxon>Pseudomonadaceae</taxon>
        <taxon>Pseudomonas</taxon>
    </lineage>
</organism>
<evidence type="ECO:0000255" key="1">
    <source>
        <dbReference type="HAMAP-Rule" id="MF_00388"/>
    </source>
</evidence>
<feature type="chain" id="PRO_0000253684" description="UDP-3-O-acyl-N-acetylglucosamine deacetylase">
    <location>
        <begin position="1"/>
        <end position="303"/>
    </location>
</feature>
<feature type="active site" description="Proton donor" evidence="1">
    <location>
        <position position="264"/>
    </location>
</feature>
<feature type="binding site" evidence="1">
    <location>
        <position position="78"/>
    </location>
    <ligand>
        <name>Zn(2+)</name>
        <dbReference type="ChEBI" id="CHEBI:29105"/>
    </ligand>
</feature>
<feature type="binding site" evidence="1">
    <location>
        <position position="237"/>
    </location>
    <ligand>
        <name>Zn(2+)</name>
        <dbReference type="ChEBI" id="CHEBI:29105"/>
    </ligand>
</feature>
<feature type="binding site" evidence="1">
    <location>
        <position position="241"/>
    </location>
    <ligand>
        <name>Zn(2+)</name>
        <dbReference type="ChEBI" id="CHEBI:29105"/>
    </ligand>
</feature>
<keyword id="KW-0378">Hydrolase</keyword>
<keyword id="KW-0441">Lipid A biosynthesis</keyword>
<keyword id="KW-0444">Lipid biosynthesis</keyword>
<keyword id="KW-0443">Lipid metabolism</keyword>
<keyword id="KW-0479">Metal-binding</keyword>
<keyword id="KW-0862">Zinc</keyword>
<reference key="1">
    <citation type="journal article" date="2009" name="Genome Biol.">
        <title>Genomic and genetic analyses of diversity and plant interactions of Pseudomonas fluorescens.</title>
        <authorList>
            <person name="Silby M.W."/>
            <person name="Cerdeno-Tarraga A.M."/>
            <person name="Vernikos G.S."/>
            <person name="Giddens S.R."/>
            <person name="Jackson R.W."/>
            <person name="Preston G.M."/>
            <person name="Zhang X.-X."/>
            <person name="Moon C.D."/>
            <person name="Gehrig S.M."/>
            <person name="Godfrey S.A.C."/>
            <person name="Knight C.G."/>
            <person name="Malone J.G."/>
            <person name="Robinson Z."/>
            <person name="Spiers A.J."/>
            <person name="Harris S."/>
            <person name="Challis G.L."/>
            <person name="Yaxley A.M."/>
            <person name="Harris D."/>
            <person name="Seeger K."/>
            <person name="Murphy L."/>
            <person name="Rutter S."/>
            <person name="Squares R."/>
            <person name="Quail M.A."/>
            <person name="Saunders E."/>
            <person name="Mavromatis K."/>
            <person name="Brettin T.S."/>
            <person name="Bentley S.D."/>
            <person name="Hothersall J."/>
            <person name="Stephens E."/>
            <person name="Thomas C.M."/>
            <person name="Parkhill J."/>
            <person name="Levy S.B."/>
            <person name="Rainey P.B."/>
            <person name="Thomson N.R."/>
        </authorList>
    </citation>
    <scope>NUCLEOTIDE SEQUENCE [LARGE SCALE GENOMIC DNA]</scope>
    <source>
        <strain>Pf0-1</strain>
    </source>
</reference>